<feature type="signal peptide" evidence="2">
    <location>
        <begin position="1"/>
        <end position="19"/>
    </location>
</feature>
<feature type="chain" id="PRO_0000248572" description="Probable peptidyl-alpha-hydroxyglycine alpha-amidating lyase pgal-1" evidence="4">
    <location>
        <begin position="20"/>
        <end position="350"/>
    </location>
</feature>
<feature type="repeat" description="NHL 1">
    <location>
        <begin position="46"/>
        <end position="90"/>
    </location>
</feature>
<feature type="repeat" description="NHL 2">
    <location>
        <begin position="113"/>
        <end position="154"/>
    </location>
</feature>
<feature type="repeat" description="NHL 3">
    <location>
        <begin position="162"/>
        <end position="206"/>
    </location>
</feature>
<feature type="repeat" description="NHL 4">
    <location>
        <begin position="212"/>
        <end position="256"/>
    </location>
</feature>
<feature type="glycosylation site" description="N-linked (GlcNAc...) asparagine" evidence="3">
    <location>
        <position position="103"/>
    </location>
</feature>
<feature type="disulfide bond" evidence="1">
    <location>
        <begin position="176"/>
        <end position="196"/>
    </location>
</feature>
<feature type="disulfide bond" evidence="1">
    <location>
        <begin position="241"/>
        <end position="252"/>
    </location>
</feature>
<reference key="1">
    <citation type="journal article" date="1998" name="Science">
        <title>Genome sequence of the nematode C. elegans: a platform for investigating biology.</title>
        <authorList>
            <consortium name="The C. elegans sequencing consortium"/>
        </authorList>
    </citation>
    <scope>NUCLEOTIDE SEQUENCE [LARGE SCALE GENOMIC DNA]</scope>
    <source>
        <strain>Bristol N2</strain>
    </source>
</reference>
<reference key="2">
    <citation type="journal article" date="2007" name="Mol. Cell. Proteomics">
        <title>Proteomics reveals N-linked glycoprotein diversity in Caenorhabditis elegans and suggests an atypical translocation mechanism for integral membrane proteins.</title>
        <authorList>
            <person name="Kaji H."/>
            <person name="Kamiie J."/>
            <person name="Kawakami H."/>
            <person name="Kido K."/>
            <person name="Yamauchi Y."/>
            <person name="Shinkawa T."/>
            <person name="Taoka M."/>
            <person name="Takahashi N."/>
            <person name="Isobe T."/>
        </authorList>
    </citation>
    <scope>GLYCOSYLATION [LARGE SCALE ANALYSIS] AT ASN-103</scope>
    <scope>IDENTIFICATION BY MASS SPECTROMETRY</scope>
    <source>
        <strain>Bristol N2</strain>
    </source>
</reference>
<name>PGAL_CAEEL</name>
<proteinExistence type="evidence at protein level"/>
<protein>
    <recommendedName>
        <fullName evidence="4">Probable peptidyl-alpha-hydroxyglycine alpha-amidating lyase pgal-1</fullName>
        <ecNumber>4.3.2.5</ecNumber>
    </recommendedName>
    <alternativeName>
        <fullName>Probable peptidylamidoglycolate lyase</fullName>
        <shortName>PAL</shortName>
    </alternativeName>
</protein>
<organism>
    <name type="scientific">Caenorhabditis elegans</name>
    <dbReference type="NCBI Taxonomy" id="6239"/>
    <lineage>
        <taxon>Eukaryota</taxon>
        <taxon>Metazoa</taxon>
        <taxon>Ecdysozoa</taxon>
        <taxon>Nematoda</taxon>
        <taxon>Chromadorea</taxon>
        <taxon>Rhabditida</taxon>
        <taxon>Rhabditina</taxon>
        <taxon>Rhabditomorpha</taxon>
        <taxon>Rhabditoidea</taxon>
        <taxon>Rhabditidae</taxon>
        <taxon>Peloderinae</taxon>
        <taxon>Caenorhabditis</taxon>
    </lineage>
</organism>
<gene>
    <name evidence="5" type="primary">pgal-1</name>
    <name evidence="5" type="ORF">F21F3.1</name>
</gene>
<evidence type="ECO:0000250" key="1"/>
<evidence type="ECO:0000255" key="2"/>
<evidence type="ECO:0000269" key="3">
    <source>
    </source>
</evidence>
<evidence type="ECO:0000305" key="4"/>
<evidence type="ECO:0000312" key="5">
    <source>
        <dbReference type="WormBase" id="F21F3.1"/>
    </source>
</evidence>
<dbReference type="EC" id="4.3.2.5"/>
<dbReference type="EMBL" id="FO081197">
    <property type="protein sequence ID" value="CCD69816.1"/>
    <property type="molecule type" value="Genomic_DNA"/>
</dbReference>
<dbReference type="PIR" id="T25723">
    <property type="entry name" value="T25723"/>
</dbReference>
<dbReference type="RefSeq" id="NP_491475.2">
    <property type="nucleotide sequence ID" value="NM_059074.6"/>
</dbReference>
<dbReference type="SMR" id="P91268"/>
<dbReference type="BioGRID" id="37570">
    <property type="interactions" value="1"/>
</dbReference>
<dbReference type="FunCoup" id="P91268">
    <property type="interactions" value="37"/>
</dbReference>
<dbReference type="STRING" id="6239.F21F3.1.1"/>
<dbReference type="GlyCosmos" id="P91268">
    <property type="glycosylation" value="1 site, No reported glycans"/>
</dbReference>
<dbReference type="iPTMnet" id="P91268"/>
<dbReference type="PaxDb" id="6239-F21F3.1.1"/>
<dbReference type="PeptideAtlas" id="P91268"/>
<dbReference type="EnsemblMetazoa" id="F21F3.1.1">
    <property type="protein sequence ID" value="F21F3.1.1"/>
    <property type="gene ID" value="WBGene00017671"/>
</dbReference>
<dbReference type="GeneID" id="172108"/>
<dbReference type="KEGG" id="cel:CELE_F21F3.1"/>
<dbReference type="UCSC" id="F21F3.1.1">
    <property type="organism name" value="c. elegans"/>
</dbReference>
<dbReference type="AGR" id="WB:WBGene00017671"/>
<dbReference type="CTD" id="172108"/>
<dbReference type="WormBase" id="F21F3.1">
    <property type="protein sequence ID" value="CE32870"/>
    <property type="gene ID" value="WBGene00017671"/>
    <property type="gene designation" value="pgal-1"/>
</dbReference>
<dbReference type="eggNOG" id="KOG3567">
    <property type="taxonomic scope" value="Eukaryota"/>
</dbReference>
<dbReference type="GeneTree" id="ENSGT00940000156369"/>
<dbReference type="HOGENOM" id="CLU_037899_1_0_1"/>
<dbReference type="InParanoid" id="P91268"/>
<dbReference type="OMA" id="NWPTDQH"/>
<dbReference type="OrthoDB" id="10018185at2759"/>
<dbReference type="PhylomeDB" id="P91268"/>
<dbReference type="PRO" id="PR:P91268"/>
<dbReference type="Proteomes" id="UP000001940">
    <property type="component" value="Chromosome I"/>
</dbReference>
<dbReference type="Bgee" id="WBGene00017671">
    <property type="expression patterns" value="Expressed in larva and 4 other cell types or tissues"/>
</dbReference>
<dbReference type="GO" id="GO:0005576">
    <property type="term" value="C:extracellular region"/>
    <property type="evidence" value="ECO:0000318"/>
    <property type="project" value="GO_Central"/>
</dbReference>
<dbReference type="GO" id="GO:0016020">
    <property type="term" value="C:membrane"/>
    <property type="evidence" value="ECO:0007669"/>
    <property type="project" value="InterPro"/>
</dbReference>
<dbReference type="GO" id="GO:0046872">
    <property type="term" value="F:metal ion binding"/>
    <property type="evidence" value="ECO:0007669"/>
    <property type="project" value="UniProtKB-KW"/>
</dbReference>
<dbReference type="GO" id="GO:0004598">
    <property type="term" value="F:peptidylamidoglycolate lyase activity"/>
    <property type="evidence" value="ECO:0007669"/>
    <property type="project" value="UniProtKB-EC"/>
</dbReference>
<dbReference type="GO" id="GO:0006518">
    <property type="term" value="P:peptide metabolic process"/>
    <property type="evidence" value="ECO:0007669"/>
    <property type="project" value="InterPro"/>
</dbReference>
<dbReference type="CDD" id="cd14958">
    <property type="entry name" value="NHL_PAL_like"/>
    <property type="match status" value="1"/>
</dbReference>
<dbReference type="FunFam" id="2.120.10.30:FF:000083">
    <property type="entry name" value="Peptidyl-glycine alpha-amidating monooxygenase B"/>
    <property type="match status" value="1"/>
</dbReference>
<dbReference type="Gene3D" id="2.120.10.30">
    <property type="entry name" value="TolB, C-terminal domain"/>
    <property type="match status" value="1"/>
</dbReference>
<dbReference type="InterPro" id="IPR011042">
    <property type="entry name" value="6-blade_b-propeller_TolB-like"/>
</dbReference>
<dbReference type="InterPro" id="IPR001258">
    <property type="entry name" value="NHL_repeat"/>
</dbReference>
<dbReference type="InterPro" id="IPR000720">
    <property type="entry name" value="PHM/PAL"/>
</dbReference>
<dbReference type="PANTHER" id="PTHR10680:SF36">
    <property type="entry name" value="PEPTIDYL-ALPHA-HYDROXYGLYCINE ALPHA-AMIDATING LYASE 1"/>
    <property type="match status" value="1"/>
</dbReference>
<dbReference type="PANTHER" id="PTHR10680">
    <property type="entry name" value="PEPTIDYL-GLYCINE ALPHA-AMIDATING MONOOXYGENASE"/>
    <property type="match status" value="1"/>
</dbReference>
<dbReference type="Pfam" id="PF01436">
    <property type="entry name" value="NHL"/>
    <property type="match status" value="3"/>
</dbReference>
<dbReference type="PRINTS" id="PR00790">
    <property type="entry name" value="PAMONOXGNASE"/>
</dbReference>
<dbReference type="SUPFAM" id="SSF101898">
    <property type="entry name" value="NHL repeat"/>
    <property type="match status" value="1"/>
</dbReference>
<dbReference type="PROSITE" id="PS51125">
    <property type="entry name" value="NHL"/>
    <property type="match status" value="4"/>
</dbReference>
<comment type="function">
    <text evidence="1">Probable lyase that catalyzes an essential reaction in C-terminal alpha-amidation of peptides. Mediates the dismutation of the unstable peptidyl(2-hydroxyglycine) intermediate to glyoxylate and the corresponding desglycine peptide amide. C-terminal amidation of peptides such as neuropeptides is essential for full biological activity (By similarity).</text>
</comment>
<comment type="catalytic activity">
    <reaction>
        <text>a [peptide]-C-terminal (2S)-2-hydroxyglycine = a [peptide]-C-terminal amide + glyoxylate</text>
        <dbReference type="Rhea" id="RHEA:20924"/>
        <dbReference type="Rhea" id="RHEA-COMP:13485"/>
        <dbReference type="Rhea" id="RHEA-COMP:15321"/>
        <dbReference type="ChEBI" id="CHEBI:36655"/>
        <dbReference type="ChEBI" id="CHEBI:137001"/>
        <dbReference type="ChEBI" id="CHEBI:142768"/>
        <dbReference type="EC" id="4.3.2.5"/>
    </reaction>
</comment>
<comment type="cofactor">
    <cofactor evidence="1">
        <name>Zn(2+)</name>
        <dbReference type="ChEBI" id="CHEBI:29105"/>
    </cofactor>
</comment>
<comment type="subcellular location">
    <subcellularLocation>
        <location evidence="4">Secreted</location>
    </subcellularLocation>
</comment>
<comment type="similarity">
    <text evidence="4">Belongs to the peptidyl-alpha-hydroxyglycine alpha-amidating lyase family.</text>
</comment>
<sequence length="350" mass="38593">MRASTACLVALLAPFYISALPVEYFYGDEQQPIEEGAENSAVFEQDRELIGLFNPSKEIGQVSGLAVNKNGHIVAFHRSGRVWDEKSFNDHETFNKDLGVINNKTIAIISREKKVIDEFGAGLFYMPHGLTIDNNGDYWVTDVGSHQVHKIDAKTQKIVMSLGEKMVPGEDQAHFCKPTDVAVAKNGHIFVADGYCNSRILKFDAKGNLMAQINAATEENQPSEFVVPHSLSLIEDMNIVCVADRENQRVQCFSAGLSEGDRTLPTGIPITSATDIGRVFAIREREHYLIGVTGNSEDVEAQMFSIDMQTGKTETFAKGVRNTHALAIAADGVMFVSQLEPSRILEIRLL</sequence>
<accession>P91268</accession>
<keyword id="KW-1015">Disulfide bond</keyword>
<keyword id="KW-0325">Glycoprotein</keyword>
<keyword id="KW-0456">Lyase</keyword>
<keyword id="KW-0479">Metal-binding</keyword>
<keyword id="KW-1185">Reference proteome</keyword>
<keyword id="KW-0677">Repeat</keyword>
<keyword id="KW-0964">Secreted</keyword>
<keyword id="KW-0732">Signal</keyword>
<keyword id="KW-0862">Zinc</keyword>